<name>DEOC_BACC1</name>
<feature type="chain" id="PRO_0000231528" description="Deoxyribose-phosphate aldolase">
    <location>
        <begin position="1"/>
        <end position="223"/>
    </location>
</feature>
<feature type="active site" description="Proton donor/acceptor" evidence="1">
    <location>
        <position position="89"/>
    </location>
</feature>
<feature type="active site" description="Schiff-base intermediate with acetaldehyde" evidence="1">
    <location>
        <position position="152"/>
    </location>
</feature>
<feature type="active site" description="Proton donor/acceptor" evidence="1">
    <location>
        <position position="181"/>
    </location>
</feature>
<sequence>MNIAKLIDHTILKANTTKEDVMKVIEEAKEYKFASVCINPTWVKLAAEELAGHDVDVCTVIGFPLGASTTETKAFETKDAIAKGATEVDMVINVGALKDGDDELVEKDIYEVVQAAKGKALVKVIIETCLLTDEEKVRACELSVKAGADFVKTSTGFSTGGATAEDIALMRKTVGPNVGVKASGGVRTREDAEKMVAAGASRVGASASVAIVLNDAKGATDNY</sequence>
<proteinExistence type="inferred from homology"/>
<accession>Q73A11</accession>
<organism>
    <name type="scientific">Bacillus cereus (strain ATCC 10987 / NRS 248)</name>
    <dbReference type="NCBI Taxonomy" id="222523"/>
    <lineage>
        <taxon>Bacteria</taxon>
        <taxon>Bacillati</taxon>
        <taxon>Bacillota</taxon>
        <taxon>Bacilli</taxon>
        <taxon>Bacillales</taxon>
        <taxon>Bacillaceae</taxon>
        <taxon>Bacillus</taxon>
        <taxon>Bacillus cereus group</taxon>
    </lineage>
</organism>
<reference key="1">
    <citation type="journal article" date="2004" name="Nucleic Acids Res.">
        <title>The genome sequence of Bacillus cereus ATCC 10987 reveals metabolic adaptations and a large plasmid related to Bacillus anthracis pXO1.</title>
        <authorList>
            <person name="Rasko D.A."/>
            <person name="Ravel J."/>
            <person name="Oekstad O.A."/>
            <person name="Helgason E."/>
            <person name="Cer R.Z."/>
            <person name="Jiang L."/>
            <person name="Shores K.A."/>
            <person name="Fouts D.E."/>
            <person name="Tourasse N.J."/>
            <person name="Angiuoli S.V."/>
            <person name="Kolonay J.F."/>
            <person name="Nelson W.C."/>
            <person name="Kolstoe A.-B."/>
            <person name="Fraser C.M."/>
            <person name="Read T.D."/>
        </authorList>
    </citation>
    <scope>NUCLEOTIDE SEQUENCE [LARGE SCALE GENOMIC DNA]</scope>
    <source>
        <strain>ATCC 10987 / NRS 248</strain>
    </source>
</reference>
<comment type="function">
    <text evidence="1">Catalyzes a reversible aldol reaction between acetaldehyde and D-glyceraldehyde 3-phosphate to generate 2-deoxy-D-ribose 5-phosphate.</text>
</comment>
<comment type="catalytic activity">
    <reaction evidence="1">
        <text>2-deoxy-D-ribose 5-phosphate = D-glyceraldehyde 3-phosphate + acetaldehyde</text>
        <dbReference type="Rhea" id="RHEA:12821"/>
        <dbReference type="ChEBI" id="CHEBI:15343"/>
        <dbReference type="ChEBI" id="CHEBI:59776"/>
        <dbReference type="ChEBI" id="CHEBI:62877"/>
        <dbReference type="EC" id="4.1.2.4"/>
    </reaction>
</comment>
<comment type="pathway">
    <text evidence="1">Carbohydrate degradation; 2-deoxy-D-ribose 1-phosphate degradation; D-glyceraldehyde 3-phosphate and acetaldehyde from 2-deoxy-alpha-D-ribose 1-phosphate: step 2/2.</text>
</comment>
<comment type="subcellular location">
    <subcellularLocation>
        <location evidence="1">Cytoplasm</location>
    </subcellularLocation>
</comment>
<comment type="similarity">
    <text evidence="1">Belongs to the DeoC/FbaB aldolase family. DeoC type 1 subfamily.</text>
</comment>
<dbReference type="EC" id="4.1.2.4" evidence="1"/>
<dbReference type="EMBL" id="AE017194">
    <property type="protein sequence ID" value="AAS40899.1"/>
    <property type="molecule type" value="Genomic_DNA"/>
</dbReference>
<dbReference type="SMR" id="Q73A11"/>
<dbReference type="KEGG" id="bca:BCE_1975"/>
<dbReference type="HOGENOM" id="CLU_053595_0_1_9"/>
<dbReference type="UniPathway" id="UPA00002">
    <property type="reaction ID" value="UER00468"/>
</dbReference>
<dbReference type="Proteomes" id="UP000002527">
    <property type="component" value="Chromosome"/>
</dbReference>
<dbReference type="GO" id="GO:0005737">
    <property type="term" value="C:cytoplasm"/>
    <property type="evidence" value="ECO:0007669"/>
    <property type="project" value="UniProtKB-SubCell"/>
</dbReference>
<dbReference type="GO" id="GO:0004139">
    <property type="term" value="F:deoxyribose-phosphate aldolase activity"/>
    <property type="evidence" value="ECO:0007669"/>
    <property type="project" value="UniProtKB-UniRule"/>
</dbReference>
<dbReference type="GO" id="GO:0006018">
    <property type="term" value="P:2-deoxyribose 1-phosphate catabolic process"/>
    <property type="evidence" value="ECO:0007669"/>
    <property type="project" value="UniProtKB-UniRule"/>
</dbReference>
<dbReference type="GO" id="GO:0016052">
    <property type="term" value="P:carbohydrate catabolic process"/>
    <property type="evidence" value="ECO:0007669"/>
    <property type="project" value="TreeGrafter"/>
</dbReference>
<dbReference type="GO" id="GO:0009264">
    <property type="term" value="P:deoxyribonucleotide catabolic process"/>
    <property type="evidence" value="ECO:0007669"/>
    <property type="project" value="InterPro"/>
</dbReference>
<dbReference type="CDD" id="cd00959">
    <property type="entry name" value="DeoC"/>
    <property type="match status" value="1"/>
</dbReference>
<dbReference type="FunFam" id="3.20.20.70:FF:000044">
    <property type="entry name" value="Deoxyribose-phosphate aldolase"/>
    <property type="match status" value="1"/>
</dbReference>
<dbReference type="Gene3D" id="3.20.20.70">
    <property type="entry name" value="Aldolase class I"/>
    <property type="match status" value="1"/>
</dbReference>
<dbReference type="HAMAP" id="MF_00114">
    <property type="entry name" value="DeoC_type1"/>
    <property type="match status" value="1"/>
</dbReference>
<dbReference type="InterPro" id="IPR013785">
    <property type="entry name" value="Aldolase_TIM"/>
</dbReference>
<dbReference type="InterPro" id="IPR011343">
    <property type="entry name" value="DeoC"/>
</dbReference>
<dbReference type="InterPro" id="IPR002915">
    <property type="entry name" value="DeoC/FbaB/LacD_aldolase"/>
</dbReference>
<dbReference type="InterPro" id="IPR028581">
    <property type="entry name" value="DeoC_typeI"/>
</dbReference>
<dbReference type="NCBIfam" id="TIGR00126">
    <property type="entry name" value="deoC"/>
    <property type="match status" value="1"/>
</dbReference>
<dbReference type="PANTHER" id="PTHR10889">
    <property type="entry name" value="DEOXYRIBOSE-PHOSPHATE ALDOLASE"/>
    <property type="match status" value="1"/>
</dbReference>
<dbReference type="PANTHER" id="PTHR10889:SF1">
    <property type="entry name" value="DEOXYRIBOSE-PHOSPHATE ALDOLASE"/>
    <property type="match status" value="1"/>
</dbReference>
<dbReference type="Pfam" id="PF01791">
    <property type="entry name" value="DeoC"/>
    <property type="match status" value="1"/>
</dbReference>
<dbReference type="PIRSF" id="PIRSF001357">
    <property type="entry name" value="DeoC"/>
    <property type="match status" value="1"/>
</dbReference>
<dbReference type="SMART" id="SM01133">
    <property type="entry name" value="DeoC"/>
    <property type="match status" value="1"/>
</dbReference>
<dbReference type="SUPFAM" id="SSF51569">
    <property type="entry name" value="Aldolase"/>
    <property type="match status" value="1"/>
</dbReference>
<evidence type="ECO:0000255" key="1">
    <source>
        <dbReference type="HAMAP-Rule" id="MF_00114"/>
    </source>
</evidence>
<protein>
    <recommendedName>
        <fullName evidence="1">Deoxyribose-phosphate aldolase</fullName>
        <shortName evidence="1">DERA</shortName>
        <ecNumber evidence="1">4.1.2.4</ecNumber>
    </recommendedName>
    <alternativeName>
        <fullName evidence="1">2-deoxy-D-ribose 5-phosphate aldolase</fullName>
    </alternativeName>
    <alternativeName>
        <fullName evidence="1">Phosphodeoxyriboaldolase</fullName>
        <shortName evidence="1">Deoxyriboaldolase</shortName>
    </alternativeName>
</protein>
<keyword id="KW-0963">Cytoplasm</keyword>
<keyword id="KW-0456">Lyase</keyword>
<keyword id="KW-0704">Schiff base</keyword>
<gene>
    <name evidence="1" type="primary">deoC</name>
    <name type="synonym">dra</name>
    <name type="ordered locus">BCE_1975</name>
</gene>